<feature type="chain" id="PRO_0000157359" description="3-octaprenyl-4-hydroxybenzoate carboxy-lyase">
    <location>
        <begin position="1"/>
        <end position="497"/>
    </location>
</feature>
<feature type="active site" description="Proton donor" evidence="1">
    <location>
        <position position="290"/>
    </location>
</feature>
<feature type="binding site" evidence="1">
    <location>
        <position position="175"/>
    </location>
    <ligand>
        <name>Mn(2+)</name>
        <dbReference type="ChEBI" id="CHEBI:29035"/>
    </ligand>
</feature>
<feature type="binding site" evidence="1">
    <location>
        <begin position="178"/>
        <end position="180"/>
    </location>
    <ligand>
        <name>prenylated FMN</name>
        <dbReference type="ChEBI" id="CHEBI:87746"/>
    </ligand>
</feature>
<feature type="binding site" evidence="1">
    <location>
        <begin position="192"/>
        <end position="194"/>
    </location>
    <ligand>
        <name>prenylated FMN</name>
        <dbReference type="ChEBI" id="CHEBI:87746"/>
    </ligand>
</feature>
<feature type="binding site" evidence="1">
    <location>
        <begin position="197"/>
        <end position="198"/>
    </location>
    <ligand>
        <name>prenylated FMN</name>
        <dbReference type="ChEBI" id="CHEBI:87746"/>
    </ligand>
</feature>
<feature type="binding site" evidence="1">
    <location>
        <position position="241"/>
    </location>
    <ligand>
        <name>Mn(2+)</name>
        <dbReference type="ChEBI" id="CHEBI:29035"/>
    </ligand>
</feature>
<sequence length="497" mass="55604">MDAMKYNDLRDFLTLLEQQGELKRITLPVDPHLEITEIADRTLRAGGPALLFENPKGYSMPVLCNLFGTPKRVAMGMGQEDVSALREVGKLLAFLKEPEPPKGFRDLFDKLPQFKQVLNMPTKRLRGAPCQQKIVSGDDVDLNRIPIMTCWPEDAAPLITWGLTVTRGPHKERQNLGIYRQQLIGKNKLIMRWLSHRGGALDYQEWCAAHPGERFPVSVALGADPATILGAVTPVPDTLSEYAFAGLLRGTKTEVVKCISNDLEVPASAEIVLEGYIEQGETAPEGPYGDHTGYYNEVDSFPVFTVTHITQREDAIYHSTYTGRPPDEPAVLGVALNEVFVPILQKQFPEIVDFYLPPEGCSYRLAVVTIKKQYAGHAKRVMMGVWSFLRQFMYTKFVIVCDDDVNARDWNDVIWAITTRMDPARDTVLVENTPIDYLDFASPVSGLGSKMGLDATNKWPGETQREWGRPIKKDPDVVAHIDAIWDELAIFNNGKSA</sequence>
<keyword id="KW-1003">Cell membrane</keyword>
<keyword id="KW-0210">Decarboxylase</keyword>
<keyword id="KW-0285">Flavoprotein</keyword>
<keyword id="KW-0288">FMN</keyword>
<keyword id="KW-0456">Lyase</keyword>
<keyword id="KW-0464">Manganese</keyword>
<keyword id="KW-0472">Membrane</keyword>
<keyword id="KW-0479">Metal-binding</keyword>
<keyword id="KW-1185">Reference proteome</keyword>
<keyword id="KW-0831">Ubiquinone biosynthesis</keyword>
<proteinExistence type="inferred from homology"/>
<evidence type="ECO:0000255" key="1">
    <source>
        <dbReference type="HAMAP-Rule" id="MF_01636"/>
    </source>
</evidence>
<protein>
    <recommendedName>
        <fullName evidence="1">3-octaprenyl-4-hydroxybenzoate carboxy-lyase</fullName>
        <ecNumber evidence="1">4.1.1.98</ecNumber>
    </recommendedName>
    <alternativeName>
        <fullName evidence="1">Polyprenyl p-hydroxybenzoate decarboxylase</fullName>
    </alternativeName>
</protein>
<name>UBID_ECOL6</name>
<accession>P0AAB5</accession>
<accession>P26615</accession>
<accession>P27861</accession>
<accession>P76767</accession>
<accession>Q47265</accession>
<accession>Q47714</accession>
<gene>
    <name evidence="1" type="primary">ubiD</name>
    <name type="ordered locus">c4790</name>
</gene>
<comment type="function">
    <text evidence="1">Catalyzes the decarboxylation of 3-octaprenyl-4-hydroxy benzoate to 2-octaprenylphenol, an intermediate step in ubiquinone biosynthesis.</text>
</comment>
<comment type="catalytic activity">
    <reaction evidence="1">
        <text>a 4-hydroxy-3-(all-trans-polyprenyl)benzoate + H(+) = a 2-(all-trans-polyprenyl)phenol + CO2</text>
        <dbReference type="Rhea" id="RHEA:41680"/>
        <dbReference type="Rhea" id="RHEA-COMP:9514"/>
        <dbReference type="Rhea" id="RHEA-COMP:9516"/>
        <dbReference type="ChEBI" id="CHEBI:1269"/>
        <dbReference type="ChEBI" id="CHEBI:15378"/>
        <dbReference type="ChEBI" id="CHEBI:16526"/>
        <dbReference type="ChEBI" id="CHEBI:78396"/>
        <dbReference type="EC" id="4.1.1.98"/>
    </reaction>
</comment>
<comment type="cofactor">
    <cofactor evidence="1">
        <name>prenylated FMN</name>
        <dbReference type="ChEBI" id="CHEBI:87746"/>
    </cofactor>
    <text evidence="1">Binds 1 prenylated FMN per subunit.</text>
</comment>
<comment type="cofactor">
    <cofactor evidence="1">
        <name>Mn(2+)</name>
        <dbReference type="ChEBI" id="CHEBI:29035"/>
    </cofactor>
</comment>
<comment type="pathway">
    <text evidence="1">Cofactor biosynthesis; ubiquinone biosynthesis.</text>
</comment>
<comment type="subunit">
    <text evidence="1">Homohexamer.</text>
</comment>
<comment type="subcellular location">
    <subcellularLocation>
        <location evidence="1">Cell membrane</location>
        <topology evidence="1">Peripheral membrane protein</topology>
    </subcellularLocation>
</comment>
<comment type="similarity">
    <text evidence="1">Belongs to the UbiD family.</text>
</comment>
<organism>
    <name type="scientific">Escherichia coli O6:H1 (strain CFT073 / ATCC 700928 / UPEC)</name>
    <dbReference type="NCBI Taxonomy" id="199310"/>
    <lineage>
        <taxon>Bacteria</taxon>
        <taxon>Pseudomonadati</taxon>
        <taxon>Pseudomonadota</taxon>
        <taxon>Gammaproteobacteria</taxon>
        <taxon>Enterobacterales</taxon>
        <taxon>Enterobacteriaceae</taxon>
        <taxon>Escherichia</taxon>
    </lineage>
</organism>
<reference key="1">
    <citation type="journal article" date="2002" name="Proc. Natl. Acad. Sci. U.S.A.">
        <title>Extensive mosaic structure revealed by the complete genome sequence of uropathogenic Escherichia coli.</title>
        <authorList>
            <person name="Welch R.A."/>
            <person name="Burland V."/>
            <person name="Plunkett G. III"/>
            <person name="Redford P."/>
            <person name="Roesch P."/>
            <person name="Rasko D."/>
            <person name="Buckles E.L."/>
            <person name="Liou S.-R."/>
            <person name="Boutin A."/>
            <person name="Hackett J."/>
            <person name="Stroud D."/>
            <person name="Mayhew G.F."/>
            <person name="Rose D.J."/>
            <person name="Zhou S."/>
            <person name="Schwartz D.C."/>
            <person name="Perna N.T."/>
            <person name="Mobley H.L.T."/>
            <person name="Donnenberg M.S."/>
            <person name="Blattner F.R."/>
        </authorList>
    </citation>
    <scope>NUCLEOTIDE SEQUENCE [LARGE SCALE GENOMIC DNA]</scope>
    <source>
        <strain>CFT073 / ATCC 700928 / UPEC</strain>
    </source>
</reference>
<dbReference type="EC" id="4.1.1.98" evidence="1"/>
<dbReference type="EMBL" id="AE014075">
    <property type="protein sequence ID" value="AAN83223.1"/>
    <property type="molecule type" value="Genomic_DNA"/>
</dbReference>
<dbReference type="RefSeq" id="WP_000339804.1">
    <property type="nucleotide sequence ID" value="NZ_CP051263.1"/>
</dbReference>
<dbReference type="SMR" id="P0AAB5"/>
<dbReference type="STRING" id="199310.c4790"/>
<dbReference type="GeneID" id="93778094"/>
<dbReference type="KEGG" id="ecc:c4790"/>
<dbReference type="eggNOG" id="COG0043">
    <property type="taxonomic scope" value="Bacteria"/>
</dbReference>
<dbReference type="HOGENOM" id="CLU_023348_4_1_6"/>
<dbReference type="BioCyc" id="ECOL199310:C4790-MONOMER"/>
<dbReference type="UniPathway" id="UPA00232"/>
<dbReference type="Proteomes" id="UP000001410">
    <property type="component" value="Chromosome"/>
</dbReference>
<dbReference type="GO" id="GO:0005829">
    <property type="term" value="C:cytosol"/>
    <property type="evidence" value="ECO:0007669"/>
    <property type="project" value="TreeGrafter"/>
</dbReference>
<dbReference type="GO" id="GO:0005886">
    <property type="term" value="C:plasma membrane"/>
    <property type="evidence" value="ECO:0007669"/>
    <property type="project" value="UniProtKB-SubCell"/>
</dbReference>
<dbReference type="GO" id="GO:0008694">
    <property type="term" value="F:3-octaprenyl-4-hydroxybenzoate carboxy-lyase activity"/>
    <property type="evidence" value="ECO:0007669"/>
    <property type="project" value="UniProtKB-UniRule"/>
</dbReference>
<dbReference type="GO" id="GO:0046872">
    <property type="term" value="F:metal ion binding"/>
    <property type="evidence" value="ECO:0007669"/>
    <property type="project" value="UniProtKB-KW"/>
</dbReference>
<dbReference type="GO" id="GO:0006744">
    <property type="term" value="P:ubiquinone biosynthetic process"/>
    <property type="evidence" value="ECO:0007669"/>
    <property type="project" value="UniProtKB-UniRule"/>
</dbReference>
<dbReference type="FunFam" id="1.20.5.570:FF:000001">
    <property type="entry name" value="3-octaprenyl-4-hydroxybenzoate carboxy-lyase"/>
    <property type="match status" value="1"/>
</dbReference>
<dbReference type="FunFam" id="3.40.1670.10:FF:000001">
    <property type="entry name" value="3-octaprenyl-4-hydroxybenzoate carboxy-lyase"/>
    <property type="match status" value="1"/>
</dbReference>
<dbReference type="Gene3D" id="1.20.5.570">
    <property type="entry name" value="Single helix bin"/>
    <property type="match status" value="1"/>
</dbReference>
<dbReference type="Gene3D" id="3.40.1670.10">
    <property type="entry name" value="UbiD C-terminal domain-like"/>
    <property type="match status" value="1"/>
</dbReference>
<dbReference type="HAMAP" id="MF_01636">
    <property type="entry name" value="UbiD"/>
    <property type="match status" value="1"/>
</dbReference>
<dbReference type="InterPro" id="IPR002830">
    <property type="entry name" value="UbiD"/>
</dbReference>
<dbReference type="InterPro" id="IPR049381">
    <property type="entry name" value="UbiD-like_C"/>
</dbReference>
<dbReference type="InterPro" id="IPR049383">
    <property type="entry name" value="UbiD-like_N"/>
</dbReference>
<dbReference type="InterPro" id="IPR023677">
    <property type="entry name" value="UbiD_bacteria"/>
</dbReference>
<dbReference type="InterPro" id="IPR048304">
    <property type="entry name" value="UbiD_Rift_dom"/>
</dbReference>
<dbReference type="NCBIfam" id="NF008175">
    <property type="entry name" value="PRK10922.1"/>
    <property type="match status" value="1"/>
</dbReference>
<dbReference type="NCBIfam" id="TIGR00148">
    <property type="entry name" value="UbiD family decarboxylase"/>
    <property type="match status" value="1"/>
</dbReference>
<dbReference type="PANTHER" id="PTHR30108">
    <property type="entry name" value="3-OCTAPRENYL-4-HYDROXYBENZOATE CARBOXY-LYASE-RELATED"/>
    <property type="match status" value="1"/>
</dbReference>
<dbReference type="PANTHER" id="PTHR30108:SF17">
    <property type="entry name" value="FERULIC ACID DECARBOXYLASE 1"/>
    <property type="match status" value="1"/>
</dbReference>
<dbReference type="Pfam" id="PF01977">
    <property type="entry name" value="UbiD"/>
    <property type="match status" value="1"/>
</dbReference>
<dbReference type="Pfam" id="PF20696">
    <property type="entry name" value="UbiD_C"/>
    <property type="match status" value="1"/>
</dbReference>
<dbReference type="Pfam" id="PF20695">
    <property type="entry name" value="UbiD_N"/>
    <property type="match status" value="1"/>
</dbReference>
<dbReference type="SUPFAM" id="SSF50475">
    <property type="entry name" value="FMN-binding split barrel"/>
    <property type="match status" value="1"/>
</dbReference>
<dbReference type="SUPFAM" id="SSF143968">
    <property type="entry name" value="UbiD C-terminal domain-like"/>
    <property type="match status" value="1"/>
</dbReference>